<reference key="1">
    <citation type="journal article" date="2009" name="PLoS ONE">
        <title>Genome degradation in Brucella ovis corresponds with narrowing of its host range and tissue tropism.</title>
        <authorList>
            <person name="Tsolis R.M."/>
            <person name="Seshadri R."/>
            <person name="Santos R.L."/>
            <person name="Sangari F.J."/>
            <person name="Lobo J.M."/>
            <person name="de Jong M.F."/>
            <person name="Ren Q."/>
            <person name="Myers G."/>
            <person name="Brinkac L.M."/>
            <person name="Nelson W.C."/>
            <person name="Deboy R.T."/>
            <person name="Angiuoli S."/>
            <person name="Khouri H."/>
            <person name="Dimitrov G."/>
            <person name="Robinson J.R."/>
            <person name="Mulligan S."/>
            <person name="Walker R.L."/>
            <person name="Elzer P.E."/>
            <person name="Hassan K.A."/>
            <person name="Paulsen I.T."/>
        </authorList>
    </citation>
    <scope>NUCLEOTIDE SEQUENCE [LARGE SCALE GENOMIC DNA]</scope>
    <source>
        <strain>ATCC 25840 / 63/290 / NCTC 10512</strain>
    </source>
</reference>
<evidence type="ECO:0000255" key="1">
    <source>
        <dbReference type="HAMAP-Rule" id="MF_00249"/>
    </source>
</evidence>
<name>HSLU_BRUO2</name>
<gene>
    <name evidence="1" type="primary">hslU</name>
    <name type="ordered locus">BOV_1999</name>
</gene>
<dbReference type="EMBL" id="CP000708">
    <property type="protein sequence ID" value="ABQ60686.1"/>
    <property type="molecule type" value="Genomic_DNA"/>
</dbReference>
<dbReference type="RefSeq" id="WP_006155251.1">
    <property type="nucleotide sequence ID" value="NC_009505.1"/>
</dbReference>
<dbReference type="SMR" id="A5VT37"/>
<dbReference type="GeneID" id="45125333"/>
<dbReference type="KEGG" id="bov:BOV_1999"/>
<dbReference type="HOGENOM" id="CLU_033123_0_0_5"/>
<dbReference type="PhylomeDB" id="A5VT37"/>
<dbReference type="Proteomes" id="UP000006383">
    <property type="component" value="Chromosome I"/>
</dbReference>
<dbReference type="GO" id="GO:0009376">
    <property type="term" value="C:HslUV protease complex"/>
    <property type="evidence" value="ECO:0007669"/>
    <property type="project" value="UniProtKB-UniRule"/>
</dbReference>
<dbReference type="GO" id="GO:0005524">
    <property type="term" value="F:ATP binding"/>
    <property type="evidence" value="ECO:0007669"/>
    <property type="project" value="UniProtKB-UniRule"/>
</dbReference>
<dbReference type="GO" id="GO:0016887">
    <property type="term" value="F:ATP hydrolysis activity"/>
    <property type="evidence" value="ECO:0007669"/>
    <property type="project" value="InterPro"/>
</dbReference>
<dbReference type="GO" id="GO:0008233">
    <property type="term" value="F:peptidase activity"/>
    <property type="evidence" value="ECO:0007669"/>
    <property type="project" value="InterPro"/>
</dbReference>
<dbReference type="GO" id="GO:0036402">
    <property type="term" value="F:proteasome-activating activity"/>
    <property type="evidence" value="ECO:0007669"/>
    <property type="project" value="UniProtKB-UniRule"/>
</dbReference>
<dbReference type="GO" id="GO:0043335">
    <property type="term" value="P:protein unfolding"/>
    <property type="evidence" value="ECO:0007669"/>
    <property type="project" value="UniProtKB-UniRule"/>
</dbReference>
<dbReference type="GO" id="GO:0051603">
    <property type="term" value="P:proteolysis involved in protein catabolic process"/>
    <property type="evidence" value="ECO:0007669"/>
    <property type="project" value="TreeGrafter"/>
</dbReference>
<dbReference type="CDD" id="cd19498">
    <property type="entry name" value="RecA-like_HslU"/>
    <property type="match status" value="1"/>
</dbReference>
<dbReference type="FunFam" id="3.40.50.300:FF:000213">
    <property type="entry name" value="ATP-dependent protease ATPase subunit HslU"/>
    <property type="match status" value="1"/>
</dbReference>
<dbReference type="FunFam" id="3.40.50.300:FF:000220">
    <property type="entry name" value="ATP-dependent protease ATPase subunit HslU"/>
    <property type="match status" value="1"/>
</dbReference>
<dbReference type="Gene3D" id="1.10.8.60">
    <property type="match status" value="1"/>
</dbReference>
<dbReference type="Gene3D" id="1.10.8.10">
    <property type="entry name" value="DNA helicase RuvA subunit, C-terminal domain"/>
    <property type="match status" value="1"/>
</dbReference>
<dbReference type="Gene3D" id="3.40.50.300">
    <property type="entry name" value="P-loop containing nucleotide triphosphate hydrolases"/>
    <property type="match status" value="1"/>
</dbReference>
<dbReference type="HAMAP" id="MF_00249">
    <property type="entry name" value="HslU"/>
    <property type="match status" value="1"/>
</dbReference>
<dbReference type="InterPro" id="IPR003593">
    <property type="entry name" value="AAA+_ATPase"/>
</dbReference>
<dbReference type="InterPro" id="IPR050052">
    <property type="entry name" value="ATP-dep_Clp_protease_ClpX"/>
</dbReference>
<dbReference type="InterPro" id="IPR003959">
    <property type="entry name" value="ATPase_AAA_core"/>
</dbReference>
<dbReference type="InterPro" id="IPR019489">
    <property type="entry name" value="Clp_ATPase_C"/>
</dbReference>
<dbReference type="InterPro" id="IPR004491">
    <property type="entry name" value="HslU"/>
</dbReference>
<dbReference type="InterPro" id="IPR027417">
    <property type="entry name" value="P-loop_NTPase"/>
</dbReference>
<dbReference type="NCBIfam" id="TIGR00390">
    <property type="entry name" value="hslU"/>
    <property type="match status" value="1"/>
</dbReference>
<dbReference type="NCBIfam" id="NF003544">
    <property type="entry name" value="PRK05201.1"/>
    <property type="match status" value="1"/>
</dbReference>
<dbReference type="PANTHER" id="PTHR48102">
    <property type="entry name" value="ATP-DEPENDENT CLP PROTEASE ATP-BINDING SUBUNIT CLPX-LIKE, MITOCHONDRIAL-RELATED"/>
    <property type="match status" value="1"/>
</dbReference>
<dbReference type="PANTHER" id="PTHR48102:SF3">
    <property type="entry name" value="ATP-DEPENDENT PROTEASE ATPASE SUBUNIT HSLU"/>
    <property type="match status" value="1"/>
</dbReference>
<dbReference type="Pfam" id="PF00004">
    <property type="entry name" value="AAA"/>
    <property type="match status" value="1"/>
</dbReference>
<dbReference type="Pfam" id="PF07724">
    <property type="entry name" value="AAA_2"/>
    <property type="match status" value="1"/>
</dbReference>
<dbReference type="SMART" id="SM00382">
    <property type="entry name" value="AAA"/>
    <property type="match status" value="1"/>
</dbReference>
<dbReference type="SMART" id="SM01086">
    <property type="entry name" value="ClpB_D2-small"/>
    <property type="match status" value="1"/>
</dbReference>
<dbReference type="SUPFAM" id="SSF52540">
    <property type="entry name" value="P-loop containing nucleoside triphosphate hydrolases"/>
    <property type="match status" value="1"/>
</dbReference>
<keyword id="KW-0067">ATP-binding</keyword>
<keyword id="KW-0143">Chaperone</keyword>
<keyword id="KW-0963">Cytoplasm</keyword>
<keyword id="KW-0547">Nucleotide-binding</keyword>
<keyword id="KW-0346">Stress response</keyword>
<comment type="function">
    <text evidence="1">ATPase subunit of a proteasome-like degradation complex; this subunit has chaperone activity. The binding of ATP and its subsequent hydrolysis by HslU are essential for unfolding of protein substrates subsequently hydrolyzed by HslV. HslU recognizes the N-terminal part of its protein substrates and unfolds these before they are guided to HslV for hydrolysis.</text>
</comment>
<comment type="subunit">
    <text evidence="1">A double ring-shaped homohexamer of HslV is capped on each side by a ring-shaped HslU homohexamer. The assembly of the HslU/HslV complex is dependent on binding of ATP.</text>
</comment>
<comment type="subcellular location">
    <subcellularLocation>
        <location evidence="1">Cytoplasm</location>
    </subcellularLocation>
</comment>
<comment type="similarity">
    <text evidence="1">Belongs to the ClpX chaperone family. HslU subfamily.</text>
</comment>
<protein>
    <recommendedName>
        <fullName evidence="1">ATP-dependent protease ATPase subunit HslU</fullName>
    </recommendedName>
    <alternativeName>
        <fullName evidence="1">Unfoldase HslU</fullName>
    </alternativeName>
</protein>
<feature type="chain" id="PRO_1000012709" description="ATP-dependent protease ATPase subunit HslU">
    <location>
        <begin position="1"/>
        <end position="434"/>
    </location>
</feature>
<feature type="binding site" evidence="1">
    <location>
        <position position="18"/>
    </location>
    <ligand>
        <name>ATP</name>
        <dbReference type="ChEBI" id="CHEBI:30616"/>
    </ligand>
</feature>
<feature type="binding site" evidence="1">
    <location>
        <begin position="60"/>
        <end position="65"/>
    </location>
    <ligand>
        <name>ATP</name>
        <dbReference type="ChEBI" id="CHEBI:30616"/>
    </ligand>
</feature>
<feature type="binding site" evidence="1">
    <location>
        <position position="247"/>
    </location>
    <ligand>
        <name>ATP</name>
        <dbReference type="ChEBI" id="CHEBI:30616"/>
    </ligand>
</feature>
<feature type="binding site" evidence="1">
    <location>
        <position position="312"/>
    </location>
    <ligand>
        <name>ATP</name>
        <dbReference type="ChEBI" id="CHEBI:30616"/>
    </ligand>
</feature>
<feature type="binding site" evidence="1">
    <location>
        <position position="384"/>
    </location>
    <ligand>
        <name>ATP</name>
        <dbReference type="ChEBI" id="CHEBI:30616"/>
    </ligand>
</feature>
<sequence length="434" mass="47999">MSNFSPREIVSELDRFIIGQKDAKRAVAIALRNRWRRQQLEGQMREEVMPKNILMIGPTGVGKTEISRRPAKLAGAPFVKVEATKFTEVGYVGRDVEQIIRDLVEIAITLVREKRREDVKAKAHLNAEERVLDALVGKTASPATRDSFRKKLRNGEMDDKEIEIEVSDSGASPNFEIPGMPGANIGVLNISDMLGKAMGGRTKTRKTTVKDSYPILINDESDKLLDQDQIVQEALRVSEDEGIVFIDEIDKIAAREGGSGAGVSREGVQRDLLPLVEDTTVATKYGPVKTDHILFITSGAFHVSKPSDLLPELQGRLPIRVELSALTREDFRRILTETEASLIKQYIALMETEEVKLEFSDDAIDALADIAVDLNATVENIGARRLQTVMEKVLDEISFTAPDKAGATFIIDAAYVKEKIGGLAKNTDLSRFIL</sequence>
<organism>
    <name type="scientific">Brucella ovis (strain ATCC 25840 / 63/290 / NCTC 10512)</name>
    <dbReference type="NCBI Taxonomy" id="444178"/>
    <lineage>
        <taxon>Bacteria</taxon>
        <taxon>Pseudomonadati</taxon>
        <taxon>Pseudomonadota</taxon>
        <taxon>Alphaproteobacteria</taxon>
        <taxon>Hyphomicrobiales</taxon>
        <taxon>Brucellaceae</taxon>
        <taxon>Brucella/Ochrobactrum group</taxon>
        <taxon>Brucella</taxon>
    </lineage>
</organism>
<accession>A5VT37</accession>
<proteinExistence type="inferred from homology"/>